<protein>
    <recommendedName>
        <fullName>Spectinomycin 9-adenylyltransferase</fullName>
    </recommendedName>
    <alternativeName>
        <fullName>AAD(9)</fullName>
    </alternativeName>
</protein>
<sequence length="260" mass="28975">MSNLINGKIPNQAIQTLKIVKDLFGSSIVGVYLFGSAVNGGLRINSDVDVLVVVNHSLPQLTRKKLTERLMTISGKIGNTDSVRPLEVTVINRSEVVPWQYPPKREFIYGEWLRGEFENGQIQEPSYDPDLAIVLAQARKNSISLFGPDSSSILVSVPLTDIRRAIKDSLPELIEGIKGDERNVILTLARMWQTVTTGEITSKDVAAEWAIPLLPKEHVTLLDIARKGYRGECDDKWEGLYSKVKALVKYMKNSIETSLN</sequence>
<organism>
    <name type="scientific">Staphylococcus aureus</name>
    <dbReference type="NCBI Taxonomy" id="1280"/>
    <lineage>
        <taxon>Bacteria</taxon>
        <taxon>Bacillati</taxon>
        <taxon>Bacillota</taxon>
        <taxon>Bacilli</taxon>
        <taxon>Bacillales</taxon>
        <taxon>Staphylococcaceae</taxon>
        <taxon>Staphylococcus</taxon>
    </lineage>
</organism>
<reference key="1">
    <citation type="journal article" date="1985" name="Mol. Gen. Genet.">
        <title>Nucleotide sequence of a spectinomycin adenyltransferase AAD(9) determinant from Staphylococcus aureus and its relationship to AAD(3') (9).</title>
        <authorList>
            <person name="Murphy E."/>
        </authorList>
    </citation>
    <scope>NUCLEOTIDE SEQUENCE [GENOMIC DNA]</scope>
    <scope>FUNCTION IN SPECTINOMYCIN RESISTANCE</scope>
    <scope>MUTAGENESIS OF ALA-165</scope>
    <source>
        <strain>NCTC 8325</strain>
        <transposon>Tn554</transposon>
    </source>
</reference>
<reference key="2">
    <citation type="journal article" date="1985" name="EMBO J.">
        <title>Transposon Tn554: complete nucleotide sequence and isolation of transposition-defective and antibiotic-sensitive mutants.</title>
        <authorList>
            <person name="Murphy E."/>
            <person name="Huwyler L."/>
            <person name="Do Carno de Freire Bastos M."/>
        </authorList>
    </citation>
    <scope>NUCLEOTIDE SEQUENCE [GENOMIC DNA]</scope>
    <source>
        <strain>NCTC 8325</strain>
        <transposon>Tn554</transposon>
    </source>
</reference>
<comment type="function">
    <text evidence="1">Mediates bacterial resistance to the antibiotic spectinomycin but not streptomycin.</text>
</comment>
<comment type="catalytic activity">
    <reaction evidence="3">
        <text>spectinomycin + ATP = 9-O-adenylylspectinomycin + diphosphate</text>
        <dbReference type="Rhea" id="RHEA:63228"/>
        <dbReference type="ChEBI" id="CHEBI:30616"/>
        <dbReference type="ChEBI" id="CHEBI:33019"/>
        <dbReference type="ChEBI" id="CHEBI:146260"/>
        <dbReference type="ChEBI" id="CHEBI:146261"/>
    </reaction>
</comment>
<accession>P0A0D2</accession>
<accession>P04827</accession>
<gene>
    <name type="primary">ant</name>
    <name evidence="2" type="synonym">spc</name>
</gene>
<keyword id="KW-0046">Antibiotic resistance</keyword>
<keyword id="KW-0067">ATP-binding</keyword>
<keyword id="KW-0547">Nucleotide-binding</keyword>
<keyword id="KW-0548">Nucleotidyltransferase</keyword>
<keyword id="KW-0808">Transferase</keyword>
<keyword id="KW-0814">Transposable element</keyword>
<proteinExistence type="evidence at protein level"/>
<name>S9AD_STAAU</name>
<evidence type="ECO:0000269" key="1">
    <source>
    </source>
</evidence>
<evidence type="ECO:0000303" key="2">
    <source>
    </source>
</evidence>
<evidence type="ECO:0000305" key="3">
    <source>
    </source>
</evidence>
<dbReference type="EMBL" id="X02588">
    <property type="protein sequence ID" value="CAA26428.1"/>
    <property type="molecule type" value="Genomic_DNA"/>
</dbReference>
<dbReference type="EMBL" id="X03216">
    <property type="protein sequence ID" value="CAA26963.1"/>
    <property type="molecule type" value="Genomic_DNA"/>
</dbReference>
<dbReference type="PIR" id="D24584">
    <property type="entry name" value="D24584"/>
</dbReference>
<dbReference type="SMR" id="P0A0D2"/>
<dbReference type="CARD" id="ARO:3002630">
    <property type="molecule name" value="ANT(9)-Ia"/>
    <property type="mechanism identifier" value="ARO:0001004"/>
    <property type="mechanism name" value="antibiotic inactivation"/>
</dbReference>
<dbReference type="KEGG" id="ag:CAA26428"/>
<dbReference type="OMA" id="VRPWRYP"/>
<dbReference type="GO" id="GO:0070566">
    <property type="term" value="F:adenylyltransferase activity"/>
    <property type="evidence" value="ECO:0007669"/>
    <property type="project" value="InterPro"/>
</dbReference>
<dbReference type="GO" id="GO:0005524">
    <property type="term" value="F:ATP binding"/>
    <property type="evidence" value="ECO:0007669"/>
    <property type="project" value="UniProtKB-KW"/>
</dbReference>
<dbReference type="GO" id="GO:0046677">
    <property type="term" value="P:response to antibiotic"/>
    <property type="evidence" value="ECO:0000315"/>
    <property type="project" value="UniProtKB"/>
</dbReference>
<dbReference type="CDD" id="cd05403">
    <property type="entry name" value="NT_KNTase_like"/>
    <property type="match status" value="1"/>
</dbReference>
<dbReference type="Gene3D" id="3.30.460.10">
    <property type="entry name" value="Beta Polymerase, domain 2"/>
    <property type="match status" value="1"/>
</dbReference>
<dbReference type="InterPro" id="IPR024172">
    <property type="entry name" value="AadA/Aad9"/>
</dbReference>
<dbReference type="InterPro" id="IPR025184">
    <property type="entry name" value="AadA_C"/>
</dbReference>
<dbReference type="InterPro" id="IPR043519">
    <property type="entry name" value="NT_sf"/>
</dbReference>
<dbReference type="InterPro" id="IPR002934">
    <property type="entry name" value="Polymerase_NTP_transf_dom"/>
</dbReference>
<dbReference type="NCBIfam" id="NF012212">
    <property type="entry name" value="ANT_9"/>
    <property type="match status" value="1"/>
</dbReference>
<dbReference type="NCBIfam" id="NF010309">
    <property type="entry name" value="PRK13746.1"/>
    <property type="match status" value="1"/>
</dbReference>
<dbReference type="Pfam" id="PF13427">
    <property type="entry name" value="AadA_C"/>
    <property type="match status" value="1"/>
</dbReference>
<dbReference type="Pfam" id="PF01909">
    <property type="entry name" value="NTP_transf_2"/>
    <property type="match status" value="1"/>
</dbReference>
<dbReference type="PIRSF" id="PIRSF000819">
    <property type="entry name" value="Streptomycin_3-adenylyltransf"/>
    <property type="match status" value="1"/>
</dbReference>
<dbReference type="SUPFAM" id="SSF81301">
    <property type="entry name" value="Nucleotidyltransferase"/>
    <property type="match status" value="1"/>
</dbReference>
<feature type="chain" id="PRO_0000068586" description="Spectinomycin 9-adenylyltransferase">
    <location>
        <begin position="1"/>
        <end position="260"/>
    </location>
</feature>
<feature type="mutagenesis site" description="Loss of spectinomycin resistance and of spectinomycin adenylylase activity." evidence="1">
    <original>A</original>
    <variation>T</variation>
    <location>
        <position position="165"/>
    </location>
</feature>